<sequence>MAINVYYDKDCDLSLIQSRKVAIIGFGSQGHAHAENLRDNGVSVVIGLVKGGKSWAKAEAKGFEVKTVSEATKGADVIMILTPDELQAEIYKNEIEPNLKDHAAIAFGHGFNVHFGQIKAPANIDVIMIAPKAPGHTVRSEFLRGGGIPDLIAVEQNASGKAKEIALSYACGIGGGRTGIIETTFKDETETDLFGEQAVLCGGLCALVNAGFDTLVEAGYEPEMAYFECLHELKLIVDLMYQGGMADMRYSISNTAEYGDYVSGVRVVGEESRKAMKEVLKEIQNGKFAKDFILERKAGYVRMNAERGIAERSLLNKTGKKLRAMMPWITNGKLIDQSKN</sequence>
<dbReference type="EC" id="1.1.1.86" evidence="1"/>
<dbReference type="EMBL" id="CP000792">
    <property type="protein sequence ID" value="EAT98752.1"/>
    <property type="molecule type" value="Genomic_DNA"/>
</dbReference>
<dbReference type="RefSeq" id="WP_012140067.1">
    <property type="nucleotide sequence ID" value="NC_009802.2"/>
</dbReference>
<dbReference type="SMR" id="A7ZEF1"/>
<dbReference type="STRING" id="360104.CCC13826_2003"/>
<dbReference type="KEGG" id="cco:CCC13826_2003"/>
<dbReference type="eggNOG" id="COG0059">
    <property type="taxonomic scope" value="Bacteria"/>
</dbReference>
<dbReference type="HOGENOM" id="CLU_033821_0_1_7"/>
<dbReference type="OrthoDB" id="9804088at2"/>
<dbReference type="UniPathway" id="UPA00047">
    <property type="reaction ID" value="UER00056"/>
</dbReference>
<dbReference type="UniPathway" id="UPA00049">
    <property type="reaction ID" value="UER00060"/>
</dbReference>
<dbReference type="Proteomes" id="UP000001121">
    <property type="component" value="Chromosome"/>
</dbReference>
<dbReference type="GO" id="GO:0005829">
    <property type="term" value="C:cytosol"/>
    <property type="evidence" value="ECO:0007669"/>
    <property type="project" value="TreeGrafter"/>
</dbReference>
<dbReference type="GO" id="GO:0004455">
    <property type="term" value="F:ketol-acid reductoisomerase activity"/>
    <property type="evidence" value="ECO:0007669"/>
    <property type="project" value="UniProtKB-UniRule"/>
</dbReference>
<dbReference type="GO" id="GO:0000287">
    <property type="term" value="F:magnesium ion binding"/>
    <property type="evidence" value="ECO:0007669"/>
    <property type="project" value="UniProtKB-UniRule"/>
</dbReference>
<dbReference type="GO" id="GO:0050661">
    <property type="term" value="F:NADP binding"/>
    <property type="evidence" value="ECO:0007669"/>
    <property type="project" value="InterPro"/>
</dbReference>
<dbReference type="GO" id="GO:0009097">
    <property type="term" value="P:isoleucine biosynthetic process"/>
    <property type="evidence" value="ECO:0007669"/>
    <property type="project" value="UniProtKB-UniRule"/>
</dbReference>
<dbReference type="GO" id="GO:0009099">
    <property type="term" value="P:L-valine biosynthetic process"/>
    <property type="evidence" value="ECO:0007669"/>
    <property type="project" value="UniProtKB-UniRule"/>
</dbReference>
<dbReference type="FunFam" id="3.40.50.720:FF:000023">
    <property type="entry name" value="Ketol-acid reductoisomerase (NADP(+))"/>
    <property type="match status" value="1"/>
</dbReference>
<dbReference type="Gene3D" id="6.10.240.10">
    <property type="match status" value="1"/>
</dbReference>
<dbReference type="Gene3D" id="3.40.50.720">
    <property type="entry name" value="NAD(P)-binding Rossmann-like Domain"/>
    <property type="match status" value="1"/>
</dbReference>
<dbReference type="HAMAP" id="MF_00435">
    <property type="entry name" value="IlvC"/>
    <property type="match status" value="1"/>
</dbReference>
<dbReference type="InterPro" id="IPR008927">
    <property type="entry name" value="6-PGluconate_DH-like_C_sf"/>
</dbReference>
<dbReference type="InterPro" id="IPR013023">
    <property type="entry name" value="KARI"/>
</dbReference>
<dbReference type="InterPro" id="IPR000506">
    <property type="entry name" value="KARI_C"/>
</dbReference>
<dbReference type="InterPro" id="IPR013116">
    <property type="entry name" value="KARI_N"/>
</dbReference>
<dbReference type="InterPro" id="IPR014359">
    <property type="entry name" value="KARI_prok"/>
</dbReference>
<dbReference type="InterPro" id="IPR036291">
    <property type="entry name" value="NAD(P)-bd_dom_sf"/>
</dbReference>
<dbReference type="NCBIfam" id="TIGR00465">
    <property type="entry name" value="ilvC"/>
    <property type="match status" value="1"/>
</dbReference>
<dbReference type="NCBIfam" id="NF004017">
    <property type="entry name" value="PRK05479.1"/>
    <property type="match status" value="1"/>
</dbReference>
<dbReference type="NCBIfam" id="NF009940">
    <property type="entry name" value="PRK13403.1"/>
    <property type="match status" value="1"/>
</dbReference>
<dbReference type="PANTHER" id="PTHR21371">
    <property type="entry name" value="KETOL-ACID REDUCTOISOMERASE, MITOCHONDRIAL"/>
    <property type="match status" value="1"/>
</dbReference>
<dbReference type="PANTHER" id="PTHR21371:SF1">
    <property type="entry name" value="KETOL-ACID REDUCTOISOMERASE, MITOCHONDRIAL"/>
    <property type="match status" value="1"/>
</dbReference>
<dbReference type="Pfam" id="PF01450">
    <property type="entry name" value="KARI_C"/>
    <property type="match status" value="1"/>
</dbReference>
<dbReference type="Pfam" id="PF07991">
    <property type="entry name" value="KARI_N"/>
    <property type="match status" value="1"/>
</dbReference>
<dbReference type="PIRSF" id="PIRSF000116">
    <property type="entry name" value="IlvC_gammaproteo"/>
    <property type="match status" value="1"/>
</dbReference>
<dbReference type="SUPFAM" id="SSF48179">
    <property type="entry name" value="6-phosphogluconate dehydrogenase C-terminal domain-like"/>
    <property type="match status" value="1"/>
</dbReference>
<dbReference type="SUPFAM" id="SSF51735">
    <property type="entry name" value="NAD(P)-binding Rossmann-fold domains"/>
    <property type="match status" value="1"/>
</dbReference>
<dbReference type="PROSITE" id="PS51851">
    <property type="entry name" value="KARI_C"/>
    <property type="match status" value="1"/>
</dbReference>
<dbReference type="PROSITE" id="PS51850">
    <property type="entry name" value="KARI_N"/>
    <property type="match status" value="1"/>
</dbReference>
<evidence type="ECO:0000255" key="1">
    <source>
        <dbReference type="HAMAP-Rule" id="MF_00435"/>
    </source>
</evidence>
<evidence type="ECO:0000255" key="2">
    <source>
        <dbReference type="PROSITE-ProRule" id="PRU01197"/>
    </source>
</evidence>
<evidence type="ECO:0000255" key="3">
    <source>
        <dbReference type="PROSITE-ProRule" id="PRU01198"/>
    </source>
</evidence>
<comment type="function">
    <text evidence="1">Involved in the biosynthesis of branched-chain amino acids (BCAA). Catalyzes an alkyl-migration followed by a ketol-acid reduction of (S)-2-acetolactate (S2AL) to yield (R)-2,3-dihydroxy-isovalerate. In the isomerase reaction, S2AL is rearranged via a Mg-dependent methyl migration to produce 3-hydroxy-3-methyl-2-ketobutyrate (HMKB). In the reductase reaction, this 2-ketoacid undergoes a metal-dependent reduction by NADPH to yield (R)-2,3-dihydroxy-isovalerate.</text>
</comment>
<comment type="catalytic activity">
    <reaction evidence="1">
        <text>(2R)-2,3-dihydroxy-3-methylbutanoate + NADP(+) = (2S)-2-acetolactate + NADPH + H(+)</text>
        <dbReference type="Rhea" id="RHEA:22068"/>
        <dbReference type="ChEBI" id="CHEBI:15378"/>
        <dbReference type="ChEBI" id="CHEBI:49072"/>
        <dbReference type="ChEBI" id="CHEBI:57783"/>
        <dbReference type="ChEBI" id="CHEBI:58349"/>
        <dbReference type="ChEBI" id="CHEBI:58476"/>
        <dbReference type="EC" id="1.1.1.86"/>
    </reaction>
</comment>
<comment type="catalytic activity">
    <reaction evidence="1">
        <text>(2R,3R)-2,3-dihydroxy-3-methylpentanoate + NADP(+) = (S)-2-ethyl-2-hydroxy-3-oxobutanoate + NADPH + H(+)</text>
        <dbReference type="Rhea" id="RHEA:13493"/>
        <dbReference type="ChEBI" id="CHEBI:15378"/>
        <dbReference type="ChEBI" id="CHEBI:49256"/>
        <dbReference type="ChEBI" id="CHEBI:49258"/>
        <dbReference type="ChEBI" id="CHEBI:57783"/>
        <dbReference type="ChEBI" id="CHEBI:58349"/>
        <dbReference type="EC" id="1.1.1.86"/>
    </reaction>
</comment>
<comment type="cofactor">
    <cofactor evidence="1">
        <name>Mg(2+)</name>
        <dbReference type="ChEBI" id="CHEBI:18420"/>
    </cofactor>
    <text evidence="1">Binds 2 magnesium ions per subunit.</text>
</comment>
<comment type="pathway">
    <text evidence="1">Amino-acid biosynthesis; L-isoleucine biosynthesis; L-isoleucine from 2-oxobutanoate: step 2/4.</text>
</comment>
<comment type="pathway">
    <text evidence="1">Amino-acid biosynthesis; L-valine biosynthesis; L-valine from pyruvate: step 2/4.</text>
</comment>
<comment type="similarity">
    <text evidence="1">Belongs to the ketol-acid reductoisomerase family.</text>
</comment>
<feature type="chain" id="PRO_1000050493" description="Ketol-acid reductoisomerase (NADP(+))">
    <location>
        <begin position="1"/>
        <end position="340"/>
    </location>
</feature>
<feature type="domain" description="KARI N-terminal Rossmann" evidence="2">
    <location>
        <begin position="3"/>
        <end position="183"/>
    </location>
</feature>
<feature type="domain" description="KARI C-terminal knotted" evidence="3">
    <location>
        <begin position="184"/>
        <end position="329"/>
    </location>
</feature>
<feature type="active site" evidence="1">
    <location>
        <position position="109"/>
    </location>
</feature>
<feature type="binding site" evidence="1">
    <location>
        <begin position="26"/>
        <end position="29"/>
    </location>
    <ligand>
        <name>NADP(+)</name>
        <dbReference type="ChEBI" id="CHEBI:58349"/>
    </ligand>
</feature>
<feature type="binding site" evidence="1">
    <location>
        <position position="54"/>
    </location>
    <ligand>
        <name>NADP(+)</name>
        <dbReference type="ChEBI" id="CHEBI:58349"/>
    </ligand>
</feature>
<feature type="binding site" evidence="1">
    <location>
        <begin position="84"/>
        <end position="87"/>
    </location>
    <ligand>
        <name>NADP(+)</name>
        <dbReference type="ChEBI" id="CHEBI:58349"/>
    </ligand>
</feature>
<feature type="binding site" evidence="1">
    <location>
        <position position="135"/>
    </location>
    <ligand>
        <name>NADP(+)</name>
        <dbReference type="ChEBI" id="CHEBI:58349"/>
    </ligand>
</feature>
<feature type="binding site" evidence="1">
    <location>
        <position position="192"/>
    </location>
    <ligand>
        <name>Mg(2+)</name>
        <dbReference type="ChEBI" id="CHEBI:18420"/>
        <label>1</label>
    </ligand>
</feature>
<feature type="binding site" evidence="1">
    <location>
        <position position="192"/>
    </location>
    <ligand>
        <name>Mg(2+)</name>
        <dbReference type="ChEBI" id="CHEBI:18420"/>
        <label>2</label>
    </ligand>
</feature>
<feature type="binding site" evidence="1">
    <location>
        <position position="196"/>
    </location>
    <ligand>
        <name>Mg(2+)</name>
        <dbReference type="ChEBI" id="CHEBI:18420"/>
        <label>1</label>
    </ligand>
</feature>
<feature type="binding site" evidence="1">
    <location>
        <position position="228"/>
    </location>
    <ligand>
        <name>Mg(2+)</name>
        <dbReference type="ChEBI" id="CHEBI:18420"/>
        <label>2</label>
    </ligand>
</feature>
<feature type="binding site" evidence="1">
    <location>
        <position position="232"/>
    </location>
    <ligand>
        <name>Mg(2+)</name>
        <dbReference type="ChEBI" id="CHEBI:18420"/>
        <label>2</label>
    </ligand>
</feature>
<feature type="binding site" evidence="1">
    <location>
        <position position="253"/>
    </location>
    <ligand>
        <name>substrate</name>
    </ligand>
</feature>
<reference key="1">
    <citation type="submission" date="2007-10" db="EMBL/GenBank/DDBJ databases">
        <title>Genome sequence of Campylobacter concisus 13826 isolated from human feces.</title>
        <authorList>
            <person name="Fouts D.E."/>
            <person name="Mongodin E.F."/>
            <person name="Puiu D."/>
            <person name="Sebastian Y."/>
            <person name="Miller W.G."/>
            <person name="Mandrell R.E."/>
            <person name="On S."/>
            <person name="Nelson K.E."/>
        </authorList>
    </citation>
    <scope>NUCLEOTIDE SEQUENCE [LARGE SCALE GENOMIC DNA]</scope>
    <source>
        <strain>13826</strain>
    </source>
</reference>
<gene>
    <name evidence="1" type="primary">ilvC</name>
    <name type="ordered locus">Ccon26_13100</name>
    <name type="ORF">CCC13826_2003</name>
</gene>
<protein>
    <recommendedName>
        <fullName evidence="1">Ketol-acid reductoisomerase (NADP(+))</fullName>
        <shortName evidence="1">KARI</shortName>
        <ecNumber evidence="1">1.1.1.86</ecNumber>
    </recommendedName>
    <alternativeName>
        <fullName evidence="1">Acetohydroxy-acid isomeroreductase</fullName>
        <shortName evidence="1">AHIR</shortName>
    </alternativeName>
    <alternativeName>
        <fullName evidence="1">Alpha-keto-beta-hydroxylacyl reductoisomerase</fullName>
    </alternativeName>
    <alternativeName>
        <fullName evidence="1">Ketol-acid reductoisomerase type 1</fullName>
    </alternativeName>
    <alternativeName>
        <fullName evidence="1">Ketol-acid reductoisomerase type I</fullName>
    </alternativeName>
</protein>
<name>ILVC_CAMC1</name>
<proteinExistence type="inferred from homology"/>
<keyword id="KW-0028">Amino-acid biosynthesis</keyword>
<keyword id="KW-0100">Branched-chain amino acid biosynthesis</keyword>
<keyword id="KW-0460">Magnesium</keyword>
<keyword id="KW-0479">Metal-binding</keyword>
<keyword id="KW-0521">NADP</keyword>
<keyword id="KW-0560">Oxidoreductase</keyword>
<accession>A7ZEF1</accession>
<organism>
    <name type="scientific">Campylobacter concisus (strain 13826)</name>
    <dbReference type="NCBI Taxonomy" id="360104"/>
    <lineage>
        <taxon>Bacteria</taxon>
        <taxon>Pseudomonadati</taxon>
        <taxon>Campylobacterota</taxon>
        <taxon>Epsilonproteobacteria</taxon>
        <taxon>Campylobacterales</taxon>
        <taxon>Campylobacteraceae</taxon>
        <taxon>Campylobacter</taxon>
    </lineage>
</organism>